<sequence>MSKSLVIVESPAKAKTINKYLGSNYVVKSSVGHIRDLPTVGSSNGEKAKAISTKGLSAEEKSAIKQEKDRNALVKRMGIDPYHQWKANYQILPGKEKVVAELKSLAKKADHIYLATDLDREGEAIAWHLREVIGGDDARFSRVVFNEITKNAIQQAFEKPEQLNLDRVNAQQTRRFLDRVVGFMVSPLLWKKVARGLSAGRVQSVAVKLVVEREREIKAFQPEEYWEIDVLTQTQAKQALRLAVTQFKGKKFEPKNATQAQSAVDFLQHADYVVSDLETKPTHSRAKAPFITSTLQQTASTRLGFGVKKTMMLAQRLYEAGYITYMRTDSTNLSQDALKMVRGYIQSHYGESYLPSKPVFYSSKENAQEAHEAIRPSDVNTLAEQLTGMDKDAVRLYDLIWRQFVACQMPAAQYDSTTVTVRAGEYELKAKGRILRFDGWTKVLPTMSKNAEDQVLPDVQLNEKLHLEHVLPEQLFTKPPARFSEAALVKELEKRGIGRPSTYAAIISTIQERGYVRVENRRFYAEKMGEIVTDRLNQSFTALMNYDFTANMENILDQIANGEKNWKTELNQFFKDFSQQLSQAELDELEGGMKPNSLVPTDINCPTCGRKMAIRTASTGVFLGCSGYALPPKERCKTTMNLIPEAELLNVLDEASETKALMERKRCPKCGTAMDSYLIDPERKIHICGHNPNCDGYVLEQGSFKIKGYDGPIVECDKCGADMHLKLGRFGKYMGCTSCDNTRKILKSGEVAPPKEEPTHFPELKCEKSDAYFVLRDGASGVFMSAHNFPKSRETRAPKVAELALYRDRLPEKLRYLADAPQHDPEGNDAIVRFSRKEKRQYVTSEKNGKATKWIVDYLGNQWVERKK</sequence>
<organism>
    <name type="scientific">Pasteurella multocida (strain Pm70)</name>
    <dbReference type="NCBI Taxonomy" id="272843"/>
    <lineage>
        <taxon>Bacteria</taxon>
        <taxon>Pseudomonadati</taxon>
        <taxon>Pseudomonadota</taxon>
        <taxon>Gammaproteobacteria</taxon>
        <taxon>Pasteurellales</taxon>
        <taxon>Pasteurellaceae</taxon>
        <taxon>Pasteurella</taxon>
    </lineage>
</organism>
<evidence type="ECO:0000255" key="1">
    <source>
        <dbReference type="HAMAP-Rule" id="MF_00952"/>
    </source>
</evidence>
<evidence type="ECO:0000255" key="2">
    <source>
        <dbReference type="PROSITE-ProRule" id="PRU01383"/>
    </source>
</evidence>
<keyword id="KW-0238">DNA-binding</keyword>
<keyword id="KW-0413">Isomerase</keyword>
<keyword id="KW-0460">Magnesium</keyword>
<keyword id="KW-0479">Metal-binding</keyword>
<keyword id="KW-1185">Reference proteome</keyword>
<keyword id="KW-0677">Repeat</keyword>
<keyword id="KW-0799">Topoisomerase</keyword>
<keyword id="KW-0862">Zinc</keyword>
<keyword id="KW-0863">Zinc-finger</keyword>
<gene>
    <name evidence="1" type="primary">topA</name>
    <name type="ordered locus">PM0615</name>
</gene>
<dbReference type="EC" id="5.6.2.1" evidence="1"/>
<dbReference type="EMBL" id="AE004439">
    <property type="protein sequence ID" value="AAK02699.1"/>
    <property type="molecule type" value="Genomic_DNA"/>
</dbReference>
<dbReference type="RefSeq" id="WP_010906754.1">
    <property type="nucleotide sequence ID" value="NC_002663.1"/>
</dbReference>
<dbReference type="SMR" id="Q9CN30"/>
<dbReference type="STRING" id="272843.PM0615"/>
<dbReference type="EnsemblBacteria" id="AAK02699">
    <property type="protein sequence ID" value="AAK02699"/>
    <property type="gene ID" value="PM0615"/>
</dbReference>
<dbReference type="KEGG" id="pmu:PM0615"/>
<dbReference type="HOGENOM" id="CLU_002929_4_1_6"/>
<dbReference type="OrthoDB" id="9804262at2"/>
<dbReference type="Proteomes" id="UP000000809">
    <property type="component" value="Chromosome"/>
</dbReference>
<dbReference type="GO" id="GO:0005694">
    <property type="term" value="C:chromosome"/>
    <property type="evidence" value="ECO:0007669"/>
    <property type="project" value="InterPro"/>
</dbReference>
<dbReference type="GO" id="GO:0003677">
    <property type="term" value="F:DNA binding"/>
    <property type="evidence" value="ECO:0007669"/>
    <property type="project" value="UniProtKB-KW"/>
</dbReference>
<dbReference type="GO" id="GO:0003917">
    <property type="term" value="F:DNA topoisomerase type I (single strand cut, ATP-independent) activity"/>
    <property type="evidence" value="ECO:0007669"/>
    <property type="project" value="UniProtKB-UniRule"/>
</dbReference>
<dbReference type="GO" id="GO:0008270">
    <property type="term" value="F:zinc ion binding"/>
    <property type="evidence" value="ECO:0007669"/>
    <property type="project" value="UniProtKB-KW"/>
</dbReference>
<dbReference type="GO" id="GO:0006265">
    <property type="term" value="P:DNA topological change"/>
    <property type="evidence" value="ECO:0007669"/>
    <property type="project" value="UniProtKB-UniRule"/>
</dbReference>
<dbReference type="CDD" id="cd00186">
    <property type="entry name" value="TOP1Ac"/>
    <property type="match status" value="1"/>
</dbReference>
<dbReference type="CDD" id="cd03363">
    <property type="entry name" value="TOPRIM_TopoIA_TopoI"/>
    <property type="match status" value="1"/>
</dbReference>
<dbReference type="FunFam" id="1.10.290.10:FF:000002">
    <property type="entry name" value="DNA topoisomerase 1"/>
    <property type="match status" value="1"/>
</dbReference>
<dbReference type="FunFam" id="3.30.65.10:FF:000002">
    <property type="entry name" value="DNA topoisomerase 1"/>
    <property type="match status" value="1"/>
</dbReference>
<dbReference type="FunFam" id="3.40.50.140:FF:000001">
    <property type="entry name" value="DNA topoisomerase 1"/>
    <property type="match status" value="1"/>
</dbReference>
<dbReference type="Gene3D" id="2.20.25.10">
    <property type="match status" value="1"/>
</dbReference>
<dbReference type="Gene3D" id="3.40.50.140">
    <property type="match status" value="1"/>
</dbReference>
<dbReference type="Gene3D" id="3.30.65.10">
    <property type="entry name" value="Bacterial Topoisomerase I, domain 1"/>
    <property type="match status" value="3"/>
</dbReference>
<dbReference type="Gene3D" id="1.10.460.10">
    <property type="entry name" value="Topoisomerase I, domain 2"/>
    <property type="match status" value="1"/>
</dbReference>
<dbReference type="Gene3D" id="2.70.20.10">
    <property type="entry name" value="Topoisomerase I, domain 3"/>
    <property type="match status" value="1"/>
</dbReference>
<dbReference type="Gene3D" id="1.10.290.10">
    <property type="entry name" value="Topoisomerase I, domain 4"/>
    <property type="match status" value="1"/>
</dbReference>
<dbReference type="HAMAP" id="MF_00952">
    <property type="entry name" value="Topoisom_1_prok"/>
    <property type="match status" value="1"/>
</dbReference>
<dbReference type="InterPro" id="IPR049330">
    <property type="entry name" value="TOP1_Znf"/>
</dbReference>
<dbReference type="InterPro" id="IPR000380">
    <property type="entry name" value="Topo_IA"/>
</dbReference>
<dbReference type="InterPro" id="IPR003601">
    <property type="entry name" value="Topo_IA_2"/>
</dbReference>
<dbReference type="InterPro" id="IPR023406">
    <property type="entry name" value="Topo_IA_AS"/>
</dbReference>
<dbReference type="InterPro" id="IPR013497">
    <property type="entry name" value="Topo_IA_cen"/>
</dbReference>
<dbReference type="InterPro" id="IPR013824">
    <property type="entry name" value="Topo_IA_cen_sub1"/>
</dbReference>
<dbReference type="InterPro" id="IPR013825">
    <property type="entry name" value="Topo_IA_cen_sub2"/>
</dbReference>
<dbReference type="InterPro" id="IPR013826">
    <property type="entry name" value="Topo_IA_cen_sub3"/>
</dbReference>
<dbReference type="InterPro" id="IPR023405">
    <property type="entry name" value="Topo_IA_core_domain"/>
</dbReference>
<dbReference type="InterPro" id="IPR003602">
    <property type="entry name" value="Topo_IA_DNA-bd_dom"/>
</dbReference>
<dbReference type="InterPro" id="IPR013498">
    <property type="entry name" value="Topo_IA_Znf"/>
</dbReference>
<dbReference type="InterPro" id="IPR005733">
    <property type="entry name" value="TopoI_bac-type"/>
</dbReference>
<dbReference type="InterPro" id="IPR013263">
    <property type="entry name" value="TopoI_Znr_bac"/>
</dbReference>
<dbReference type="InterPro" id="IPR028612">
    <property type="entry name" value="Topoisom_1_IA"/>
</dbReference>
<dbReference type="InterPro" id="IPR006171">
    <property type="entry name" value="TOPRIM_dom"/>
</dbReference>
<dbReference type="InterPro" id="IPR034149">
    <property type="entry name" value="TOPRIM_TopoI"/>
</dbReference>
<dbReference type="NCBIfam" id="TIGR01051">
    <property type="entry name" value="topA_bact"/>
    <property type="match status" value="1"/>
</dbReference>
<dbReference type="PANTHER" id="PTHR42785:SF1">
    <property type="entry name" value="DNA TOPOISOMERASE"/>
    <property type="match status" value="1"/>
</dbReference>
<dbReference type="PANTHER" id="PTHR42785">
    <property type="entry name" value="DNA TOPOISOMERASE, TYPE IA, CORE"/>
    <property type="match status" value="1"/>
</dbReference>
<dbReference type="Pfam" id="PF01131">
    <property type="entry name" value="Topoisom_bac"/>
    <property type="match status" value="1"/>
</dbReference>
<dbReference type="Pfam" id="PF01751">
    <property type="entry name" value="Toprim"/>
    <property type="match status" value="1"/>
</dbReference>
<dbReference type="Pfam" id="PF21372">
    <property type="entry name" value="Zn_ribbon_bTOP1"/>
    <property type="match status" value="1"/>
</dbReference>
<dbReference type="Pfam" id="PF01396">
    <property type="entry name" value="Zn_ribbon_Top1"/>
    <property type="match status" value="2"/>
</dbReference>
<dbReference type="Pfam" id="PF08272">
    <property type="entry name" value="Zn_Ribbon_Topo"/>
    <property type="match status" value="2"/>
</dbReference>
<dbReference type="PRINTS" id="PR00417">
    <property type="entry name" value="PRTPISMRASEI"/>
</dbReference>
<dbReference type="SMART" id="SM00437">
    <property type="entry name" value="TOP1Ac"/>
    <property type="match status" value="1"/>
</dbReference>
<dbReference type="SMART" id="SM00436">
    <property type="entry name" value="TOP1Bc"/>
    <property type="match status" value="1"/>
</dbReference>
<dbReference type="SMART" id="SM00493">
    <property type="entry name" value="TOPRIM"/>
    <property type="match status" value="1"/>
</dbReference>
<dbReference type="SUPFAM" id="SSF56712">
    <property type="entry name" value="Prokaryotic type I DNA topoisomerase"/>
    <property type="match status" value="1"/>
</dbReference>
<dbReference type="SUPFAM" id="SSF57783">
    <property type="entry name" value="Zinc beta-ribbon"/>
    <property type="match status" value="3"/>
</dbReference>
<dbReference type="PROSITE" id="PS00396">
    <property type="entry name" value="TOPO_IA_1"/>
    <property type="match status" value="1"/>
</dbReference>
<dbReference type="PROSITE" id="PS52039">
    <property type="entry name" value="TOPO_IA_2"/>
    <property type="match status" value="1"/>
</dbReference>
<dbReference type="PROSITE" id="PS50880">
    <property type="entry name" value="TOPRIM"/>
    <property type="match status" value="1"/>
</dbReference>
<proteinExistence type="inferred from homology"/>
<accession>Q9CN30</accession>
<feature type="chain" id="PRO_0000145160" description="DNA topoisomerase 1">
    <location>
        <begin position="1"/>
        <end position="868"/>
    </location>
</feature>
<feature type="domain" description="Toprim" evidence="1">
    <location>
        <begin position="3"/>
        <end position="148"/>
    </location>
</feature>
<feature type="domain" description="Topo IA-type catalytic" evidence="2">
    <location>
        <begin position="164"/>
        <end position="581"/>
    </location>
</feature>
<feature type="zinc finger region" description="C4-type 1">
    <location>
        <begin position="605"/>
        <end position="636"/>
    </location>
</feature>
<feature type="zinc finger region" description="C4-type 2">
    <location>
        <begin position="667"/>
        <end position="694"/>
    </location>
</feature>
<feature type="zinc finger region" description="C4-type 3">
    <location>
        <begin position="716"/>
        <end position="739"/>
    </location>
</feature>
<feature type="region of interest" description="Interaction with DNA" evidence="1">
    <location>
        <begin position="198"/>
        <end position="203"/>
    </location>
</feature>
<feature type="active site" description="O-(5'-phospho-DNA)-tyrosine intermediate" evidence="2">
    <location>
        <position position="325"/>
    </location>
</feature>
<feature type="binding site" evidence="1">
    <location>
        <position position="9"/>
    </location>
    <ligand>
        <name>Mg(2+)</name>
        <dbReference type="ChEBI" id="CHEBI:18420"/>
        <note>catalytic</note>
    </ligand>
</feature>
<feature type="binding site" evidence="1">
    <location>
        <position position="117"/>
    </location>
    <ligand>
        <name>Mg(2+)</name>
        <dbReference type="ChEBI" id="CHEBI:18420"/>
        <note>catalytic</note>
    </ligand>
</feature>
<feature type="site" description="Interaction with DNA" evidence="1">
    <location>
        <position position="33"/>
    </location>
</feature>
<feature type="site" description="Interaction with DNA" evidence="1">
    <location>
        <position position="174"/>
    </location>
</feature>
<feature type="site" description="Interaction with DNA" evidence="1">
    <location>
        <position position="175"/>
    </location>
</feature>
<feature type="site" description="Interaction with DNA" evidence="1">
    <location>
        <position position="178"/>
    </location>
</feature>
<feature type="site" description="Interaction with DNA" evidence="1">
    <location>
        <position position="190"/>
    </location>
</feature>
<feature type="site" description="Interaction with DNA" evidence="1">
    <location>
        <position position="327"/>
    </location>
</feature>
<feature type="site" description="Interaction with DNA" evidence="1">
    <location>
        <position position="513"/>
    </location>
</feature>
<comment type="function">
    <text evidence="1">Releases the supercoiling and torsional tension of DNA, which is introduced during the DNA replication and transcription, by transiently cleaving and rejoining one strand of the DNA duplex. Introduces a single-strand break via transesterification at a target site in duplex DNA. The scissile phosphodiester is attacked by the catalytic tyrosine of the enzyme, resulting in the formation of a DNA-(5'-phosphotyrosyl)-enzyme intermediate and the expulsion of a 3'-OH DNA strand. The free DNA strand then undergoes passage around the unbroken strand, thus removing DNA supercoils. Finally, in the religation step, the DNA 3'-OH attacks the covalent intermediate to expel the active-site tyrosine and restore the DNA phosphodiester backbone.</text>
</comment>
<comment type="catalytic activity">
    <reaction evidence="1">
        <text>ATP-independent breakage of single-stranded DNA, followed by passage and rejoining.</text>
        <dbReference type="EC" id="5.6.2.1"/>
    </reaction>
</comment>
<comment type="cofactor">
    <cofactor evidence="1">
        <name>Mg(2+)</name>
        <dbReference type="ChEBI" id="CHEBI:18420"/>
    </cofactor>
</comment>
<comment type="subunit">
    <text evidence="1">Monomer.</text>
</comment>
<comment type="similarity">
    <text evidence="1">Belongs to the type IA topoisomerase family.</text>
</comment>
<name>TOP1_PASMU</name>
<reference key="1">
    <citation type="journal article" date="2001" name="Proc. Natl. Acad. Sci. U.S.A.">
        <title>Complete genomic sequence of Pasteurella multocida Pm70.</title>
        <authorList>
            <person name="May B.J."/>
            <person name="Zhang Q."/>
            <person name="Li L.L."/>
            <person name="Paustian M.L."/>
            <person name="Whittam T.S."/>
            <person name="Kapur V."/>
        </authorList>
    </citation>
    <scope>NUCLEOTIDE SEQUENCE [LARGE SCALE GENOMIC DNA]</scope>
    <source>
        <strain>Pm70</strain>
    </source>
</reference>
<protein>
    <recommendedName>
        <fullName evidence="1">DNA topoisomerase 1</fullName>
        <ecNumber evidence="1">5.6.2.1</ecNumber>
    </recommendedName>
    <alternativeName>
        <fullName evidence="1">DNA topoisomerase I</fullName>
    </alternativeName>
    <alternativeName>
        <fullName>Omega-protein</fullName>
    </alternativeName>
    <alternativeName>
        <fullName>Relaxing enzyme</fullName>
    </alternativeName>
    <alternativeName>
        <fullName>Swivelase</fullName>
    </alternativeName>
    <alternativeName>
        <fullName>Untwisting enzyme</fullName>
    </alternativeName>
</protein>